<evidence type="ECO:0000255" key="1">
    <source>
        <dbReference type="HAMAP-Rule" id="MF_01337"/>
    </source>
</evidence>
<evidence type="ECO:0000305" key="2"/>
<feature type="chain" id="PRO_1000086651" description="Large ribosomal subunit protein uL18">
    <location>
        <begin position="1"/>
        <end position="120"/>
    </location>
</feature>
<protein>
    <recommendedName>
        <fullName evidence="1">Large ribosomal subunit protein uL18</fullName>
    </recommendedName>
    <alternativeName>
        <fullName evidence="2">50S ribosomal protein L18</fullName>
    </alternativeName>
</protein>
<proteinExistence type="inferred from homology"/>
<keyword id="KW-0687">Ribonucleoprotein</keyword>
<keyword id="KW-0689">Ribosomal protein</keyword>
<keyword id="KW-0694">RNA-binding</keyword>
<keyword id="KW-0699">rRNA-binding</keyword>
<sequence>MVSSKDIIQRRARRVRRRIKMVSHDRPRLSVYRSNQNIYAQVIDDLRGCTLVSASTLESDLKKSLKSGADKEAAFAVGKLIAERAKKAGVNEVVFDRGAYVYHGRVKALAEAAREGGLSF</sequence>
<organism>
    <name type="scientific">Bartonella tribocorum (strain CIP 105476 / IBS 506)</name>
    <dbReference type="NCBI Taxonomy" id="382640"/>
    <lineage>
        <taxon>Bacteria</taxon>
        <taxon>Pseudomonadati</taxon>
        <taxon>Pseudomonadota</taxon>
        <taxon>Alphaproteobacteria</taxon>
        <taxon>Hyphomicrobiales</taxon>
        <taxon>Bartonellaceae</taxon>
        <taxon>Bartonella</taxon>
    </lineage>
</organism>
<name>RL18_BART1</name>
<reference key="1">
    <citation type="journal article" date="2007" name="Nat. Genet.">
        <title>Genomic analysis of Bartonella identifies type IV secretion systems as host adaptability factors.</title>
        <authorList>
            <person name="Saenz H.L."/>
            <person name="Engel P."/>
            <person name="Stoeckli M.C."/>
            <person name="Lanz C."/>
            <person name="Raddatz G."/>
            <person name="Vayssier-Taussat M."/>
            <person name="Birtles R."/>
            <person name="Schuster S.C."/>
            <person name="Dehio C."/>
        </authorList>
    </citation>
    <scope>NUCLEOTIDE SEQUENCE [LARGE SCALE GENOMIC DNA]</scope>
    <source>
        <strain>CIP 105476 / IBS 506</strain>
    </source>
</reference>
<accession>A9IW06</accession>
<comment type="function">
    <text evidence="1">This is one of the proteins that bind and probably mediate the attachment of the 5S RNA into the large ribosomal subunit, where it forms part of the central protuberance.</text>
</comment>
<comment type="subunit">
    <text evidence="1">Part of the 50S ribosomal subunit; part of the 5S rRNA/L5/L18/L25 subcomplex. Contacts the 5S and 23S rRNAs.</text>
</comment>
<comment type="similarity">
    <text evidence="1">Belongs to the universal ribosomal protein uL18 family.</text>
</comment>
<dbReference type="EMBL" id="AM260525">
    <property type="protein sequence ID" value="CAK01848.1"/>
    <property type="molecule type" value="Genomic_DNA"/>
</dbReference>
<dbReference type="RefSeq" id="WP_012231986.1">
    <property type="nucleotide sequence ID" value="NC_010161.1"/>
</dbReference>
<dbReference type="SMR" id="A9IW06"/>
<dbReference type="KEGG" id="btr:BT_1502"/>
<dbReference type="eggNOG" id="COG0256">
    <property type="taxonomic scope" value="Bacteria"/>
</dbReference>
<dbReference type="HOGENOM" id="CLU_098841_0_1_5"/>
<dbReference type="Proteomes" id="UP000001592">
    <property type="component" value="Chromosome"/>
</dbReference>
<dbReference type="GO" id="GO:0022625">
    <property type="term" value="C:cytosolic large ribosomal subunit"/>
    <property type="evidence" value="ECO:0007669"/>
    <property type="project" value="TreeGrafter"/>
</dbReference>
<dbReference type="GO" id="GO:0008097">
    <property type="term" value="F:5S rRNA binding"/>
    <property type="evidence" value="ECO:0007669"/>
    <property type="project" value="TreeGrafter"/>
</dbReference>
<dbReference type="GO" id="GO:0003735">
    <property type="term" value="F:structural constituent of ribosome"/>
    <property type="evidence" value="ECO:0007669"/>
    <property type="project" value="InterPro"/>
</dbReference>
<dbReference type="GO" id="GO:0006412">
    <property type="term" value="P:translation"/>
    <property type="evidence" value="ECO:0007669"/>
    <property type="project" value="UniProtKB-UniRule"/>
</dbReference>
<dbReference type="CDD" id="cd00432">
    <property type="entry name" value="Ribosomal_L18_L5e"/>
    <property type="match status" value="1"/>
</dbReference>
<dbReference type="FunFam" id="3.30.420.100:FF:000001">
    <property type="entry name" value="50S ribosomal protein L18"/>
    <property type="match status" value="1"/>
</dbReference>
<dbReference type="Gene3D" id="3.30.420.100">
    <property type="match status" value="1"/>
</dbReference>
<dbReference type="HAMAP" id="MF_01337_B">
    <property type="entry name" value="Ribosomal_uL18_B"/>
    <property type="match status" value="1"/>
</dbReference>
<dbReference type="InterPro" id="IPR004389">
    <property type="entry name" value="Ribosomal_uL18_bac-type"/>
</dbReference>
<dbReference type="InterPro" id="IPR005484">
    <property type="entry name" value="Ribosomal_uL18_bac/euk"/>
</dbReference>
<dbReference type="NCBIfam" id="TIGR00060">
    <property type="entry name" value="L18_bact"/>
    <property type="match status" value="1"/>
</dbReference>
<dbReference type="PANTHER" id="PTHR12899">
    <property type="entry name" value="39S RIBOSOMAL PROTEIN L18, MITOCHONDRIAL"/>
    <property type="match status" value="1"/>
</dbReference>
<dbReference type="PANTHER" id="PTHR12899:SF3">
    <property type="entry name" value="LARGE RIBOSOMAL SUBUNIT PROTEIN UL18M"/>
    <property type="match status" value="1"/>
</dbReference>
<dbReference type="Pfam" id="PF00861">
    <property type="entry name" value="Ribosomal_L18p"/>
    <property type="match status" value="1"/>
</dbReference>
<dbReference type="SUPFAM" id="SSF53137">
    <property type="entry name" value="Translational machinery components"/>
    <property type="match status" value="1"/>
</dbReference>
<gene>
    <name evidence="1" type="primary">rplR</name>
    <name type="ordered locus">BT_1502</name>
</gene>